<name>RK27_PORPP</name>
<feature type="chain" id="PRO_0000181226" description="Large ribosomal subunit protein bL27c">
    <location>
        <begin position="1" status="less than"/>
        <end position="47" status="greater than"/>
    </location>
</feature>
<feature type="region of interest" description="Disordered" evidence="1">
    <location>
        <begin position="1"/>
        <end position="21"/>
    </location>
</feature>
<feature type="non-terminal residue">
    <location>
        <position position="1"/>
    </location>
</feature>
<feature type="non-terminal residue">
    <location>
        <position position="47"/>
    </location>
</feature>
<sequence>STKNGRDSNAQRLGVKKYGGETVKPGNILIRQRGTKIYPGHNVGMGK</sequence>
<gene>
    <name type="primary">rpl27</name>
</gene>
<keyword id="KW-0150">Chloroplast</keyword>
<keyword id="KW-0934">Plastid</keyword>
<keyword id="KW-0687">Ribonucleoprotein</keyword>
<keyword id="KW-0689">Ribosomal protein</keyword>
<dbReference type="EMBL" id="D26101">
    <property type="protein sequence ID" value="BAA05097.1"/>
    <property type="molecule type" value="Genomic_DNA"/>
</dbReference>
<dbReference type="SMR" id="P41553"/>
<dbReference type="GO" id="GO:0009507">
    <property type="term" value="C:chloroplast"/>
    <property type="evidence" value="ECO:0007669"/>
    <property type="project" value="UniProtKB-SubCell"/>
</dbReference>
<dbReference type="GO" id="GO:1990904">
    <property type="term" value="C:ribonucleoprotein complex"/>
    <property type="evidence" value="ECO:0007669"/>
    <property type="project" value="UniProtKB-KW"/>
</dbReference>
<dbReference type="GO" id="GO:0005840">
    <property type="term" value="C:ribosome"/>
    <property type="evidence" value="ECO:0007669"/>
    <property type="project" value="UniProtKB-KW"/>
</dbReference>
<dbReference type="GO" id="GO:0003735">
    <property type="term" value="F:structural constituent of ribosome"/>
    <property type="evidence" value="ECO:0007669"/>
    <property type="project" value="InterPro"/>
</dbReference>
<dbReference type="GO" id="GO:0006412">
    <property type="term" value="P:translation"/>
    <property type="evidence" value="ECO:0007669"/>
    <property type="project" value="InterPro"/>
</dbReference>
<dbReference type="Gene3D" id="2.40.50.100">
    <property type="match status" value="1"/>
</dbReference>
<dbReference type="InterPro" id="IPR001684">
    <property type="entry name" value="Ribosomal_bL27"/>
</dbReference>
<dbReference type="InterPro" id="IPR018261">
    <property type="entry name" value="Ribosomal_bL27_CS"/>
</dbReference>
<dbReference type="PANTHER" id="PTHR15893:SF0">
    <property type="entry name" value="LARGE RIBOSOMAL SUBUNIT PROTEIN BL27M"/>
    <property type="match status" value="1"/>
</dbReference>
<dbReference type="PANTHER" id="PTHR15893">
    <property type="entry name" value="RIBOSOMAL PROTEIN L27"/>
    <property type="match status" value="1"/>
</dbReference>
<dbReference type="Pfam" id="PF01016">
    <property type="entry name" value="Ribosomal_L27"/>
    <property type="match status" value="1"/>
</dbReference>
<dbReference type="SUPFAM" id="SSF110324">
    <property type="entry name" value="Ribosomal L27 protein-like"/>
    <property type="match status" value="1"/>
</dbReference>
<dbReference type="PROSITE" id="PS00831">
    <property type="entry name" value="RIBOSOMAL_L27"/>
    <property type="match status" value="1"/>
</dbReference>
<accession>P41553</accession>
<proteinExistence type="inferred from homology"/>
<geneLocation type="chloroplast"/>
<evidence type="ECO:0000256" key="1">
    <source>
        <dbReference type="SAM" id="MobiDB-lite"/>
    </source>
</evidence>
<evidence type="ECO:0000305" key="2"/>
<comment type="subcellular location">
    <subcellularLocation>
        <location>Plastid</location>
        <location>Chloroplast</location>
    </subcellularLocation>
</comment>
<comment type="similarity">
    <text evidence="2">Belongs to the bacterial ribosomal protein bL27 family.</text>
</comment>
<protein>
    <recommendedName>
        <fullName evidence="2">Large ribosomal subunit protein bL27c</fullName>
    </recommendedName>
    <alternativeName>
        <fullName>50S ribosomal protein L27, chloroplastic</fullName>
    </alternativeName>
</protein>
<organism>
    <name type="scientific">Porphyridium purpureum</name>
    <name type="common">Red alga</name>
    <name type="synonym">Porphyridium cruentum</name>
    <dbReference type="NCBI Taxonomy" id="35688"/>
    <lineage>
        <taxon>Eukaryota</taxon>
        <taxon>Rhodophyta</taxon>
        <taxon>Bangiophyceae</taxon>
        <taxon>Porphyridiales</taxon>
        <taxon>Porphyridiaceae</taxon>
        <taxon>Porphyridium</taxon>
    </lineage>
</organism>
<reference key="1">
    <citation type="journal article" date="1994" name="Plant Mol. Biol.">
        <title>The gene for ribosomal protein L27 is located on the plastid rather than the nuclear genome of the chlorophyll c-containing alga Pleurochrysis carterae.</title>
        <authorList>
            <person name="Fujiwara S."/>
            <person name="Kawachi M."/>
            <person name="Inouye I."/>
            <person name="Someya J."/>
        </authorList>
    </citation>
    <scope>NUCLEOTIDE SEQUENCE [GENOMIC DNA]</scope>
</reference>